<comment type="function">
    <text evidence="1">Involved in the maturation of [NiFe] hydrogenases. Required for nickel insertion into the metal center of the hydrogenase.</text>
</comment>
<comment type="similarity">
    <text evidence="1">Belongs to the HypA/HybF family.</text>
</comment>
<evidence type="ECO:0000255" key="1">
    <source>
        <dbReference type="HAMAP-Rule" id="MF_00213"/>
    </source>
</evidence>
<keyword id="KW-0479">Metal-binding</keyword>
<keyword id="KW-0533">Nickel</keyword>
<keyword id="KW-0862">Zinc</keyword>
<proteinExistence type="inferred from homology"/>
<protein>
    <recommendedName>
        <fullName evidence="1">Hydrogenase maturation factor HypA</fullName>
    </recommendedName>
</protein>
<accession>B4S9J3</accession>
<gene>
    <name evidence="1" type="primary">hypA</name>
    <name type="ordered locus">Paes_1645</name>
</gene>
<dbReference type="EMBL" id="CP001108">
    <property type="protein sequence ID" value="ACF46663.1"/>
    <property type="molecule type" value="Genomic_DNA"/>
</dbReference>
<dbReference type="RefSeq" id="WP_012506196.1">
    <property type="nucleotide sequence ID" value="NC_011059.1"/>
</dbReference>
<dbReference type="SMR" id="B4S9J3"/>
<dbReference type="STRING" id="290512.Paes_1645"/>
<dbReference type="KEGG" id="paa:Paes_1645"/>
<dbReference type="eggNOG" id="COG0375">
    <property type="taxonomic scope" value="Bacteria"/>
</dbReference>
<dbReference type="HOGENOM" id="CLU_126929_0_0_10"/>
<dbReference type="Proteomes" id="UP000002725">
    <property type="component" value="Chromosome"/>
</dbReference>
<dbReference type="GO" id="GO:0016151">
    <property type="term" value="F:nickel cation binding"/>
    <property type="evidence" value="ECO:0007669"/>
    <property type="project" value="UniProtKB-UniRule"/>
</dbReference>
<dbReference type="GO" id="GO:0008270">
    <property type="term" value="F:zinc ion binding"/>
    <property type="evidence" value="ECO:0007669"/>
    <property type="project" value="UniProtKB-UniRule"/>
</dbReference>
<dbReference type="GO" id="GO:0051604">
    <property type="term" value="P:protein maturation"/>
    <property type="evidence" value="ECO:0007669"/>
    <property type="project" value="InterPro"/>
</dbReference>
<dbReference type="GO" id="GO:0036211">
    <property type="term" value="P:protein modification process"/>
    <property type="evidence" value="ECO:0007669"/>
    <property type="project" value="UniProtKB-UniRule"/>
</dbReference>
<dbReference type="Gene3D" id="3.30.2320.80">
    <property type="match status" value="1"/>
</dbReference>
<dbReference type="HAMAP" id="MF_00213">
    <property type="entry name" value="HypA_HybF"/>
    <property type="match status" value="1"/>
</dbReference>
<dbReference type="InterPro" id="IPR020538">
    <property type="entry name" value="Hydgase_Ni_incorp_HypA/HybF_CS"/>
</dbReference>
<dbReference type="InterPro" id="IPR000688">
    <property type="entry name" value="HypA/HybF"/>
</dbReference>
<dbReference type="NCBIfam" id="TIGR00100">
    <property type="entry name" value="hypA"/>
    <property type="match status" value="1"/>
</dbReference>
<dbReference type="PANTHER" id="PTHR34535">
    <property type="entry name" value="HYDROGENASE MATURATION FACTOR HYPA"/>
    <property type="match status" value="1"/>
</dbReference>
<dbReference type="PANTHER" id="PTHR34535:SF3">
    <property type="entry name" value="HYDROGENASE MATURATION FACTOR HYPA"/>
    <property type="match status" value="1"/>
</dbReference>
<dbReference type="Pfam" id="PF01155">
    <property type="entry name" value="HypA"/>
    <property type="match status" value="1"/>
</dbReference>
<dbReference type="PIRSF" id="PIRSF004761">
    <property type="entry name" value="Hydrgn_mat_HypA"/>
    <property type="match status" value="1"/>
</dbReference>
<dbReference type="PROSITE" id="PS01249">
    <property type="entry name" value="HYPA"/>
    <property type="match status" value="1"/>
</dbReference>
<name>HYPA_PROA2</name>
<organism>
    <name type="scientific">Prosthecochloris aestuarii (strain DSM 271 / SK 413)</name>
    <dbReference type="NCBI Taxonomy" id="290512"/>
    <lineage>
        <taxon>Bacteria</taxon>
        <taxon>Pseudomonadati</taxon>
        <taxon>Chlorobiota</taxon>
        <taxon>Chlorobiia</taxon>
        <taxon>Chlorobiales</taxon>
        <taxon>Chlorobiaceae</taxon>
        <taxon>Prosthecochloris</taxon>
    </lineage>
</organism>
<sequence>MHEMSIALSVVDAITARAREEQAEKVTAIELVAGKLSGVEIESLKFCFSAAVRGTIMEDAELMVTVPLSEGLCEVCGERFAVDGYYTQCPSCGSYKVRIVSGKELSIRSITLE</sequence>
<feature type="chain" id="PRO_1000099896" description="Hydrogenase maturation factor HypA">
    <location>
        <begin position="1"/>
        <end position="113"/>
    </location>
</feature>
<feature type="binding site" evidence="1">
    <location>
        <position position="2"/>
    </location>
    <ligand>
        <name>Ni(2+)</name>
        <dbReference type="ChEBI" id="CHEBI:49786"/>
    </ligand>
</feature>
<feature type="binding site" evidence="1">
    <location>
        <position position="73"/>
    </location>
    <ligand>
        <name>Zn(2+)</name>
        <dbReference type="ChEBI" id="CHEBI:29105"/>
    </ligand>
</feature>
<feature type="binding site" evidence="1">
    <location>
        <position position="76"/>
    </location>
    <ligand>
        <name>Zn(2+)</name>
        <dbReference type="ChEBI" id="CHEBI:29105"/>
    </ligand>
</feature>
<feature type="binding site" evidence="1">
    <location>
        <position position="89"/>
    </location>
    <ligand>
        <name>Zn(2+)</name>
        <dbReference type="ChEBI" id="CHEBI:29105"/>
    </ligand>
</feature>
<feature type="binding site" evidence="1">
    <location>
        <position position="92"/>
    </location>
    <ligand>
        <name>Zn(2+)</name>
        <dbReference type="ChEBI" id="CHEBI:29105"/>
    </ligand>
</feature>
<reference key="1">
    <citation type="submission" date="2008-06" db="EMBL/GenBank/DDBJ databases">
        <title>Complete sequence of chromosome of Prosthecochloris aestuarii DSM 271.</title>
        <authorList>
            <consortium name="US DOE Joint Genome Institute"/>
            <person name="Lucas S."/>
            <person name="Copeland A."/>
            <person name="Lapidus A."/>
            <person name="Glavina del Rio T."/>
            <person name="Dalin E."/>
            <person name="Tice H."/>
            <person name="Bruce D."/>
            <person name="Goodwin L."/>
            <person name="Pitluck S."/>
            <person name="Schmutz J."/>
            <person name="Larimer F."/>
            <person name="Land M."/>
            <person name="Hauser L."/>
            <person name="Kyrpides N."/>
            <person name="Anderson I."/>
            <person name="Liu Z."/>
            <person name="Li T."/>
            <person name="Zhao F."/>
            <person name="Overmann J."/>
            <person name="Bryant D.A."/>
            <person name="Richardson P."/>
        </authorList>
    </citation>
    <scope>NUCLEOTIDE SEQUENCE [LARGE SCALE GENOMIC DNA]</scope>
    <source>
        <strain>DSM 271 / SK 413</strain>
    </source>
</reference>